<gene>
    <name evidence="1" type="primary">eno</name>
    <name type="ordered locus">CGSHiGG_08225</name>
</gene>
<organism>
    <name type="scientific">Haemophilus influenzae (strain PittGG)</name>
    <dbReference type="NCBI Taxonomy" id="374931"/>
    <lineage>
        <taxon>Bacteria</taxon>
        <taxon>Pseudomonadati</taxon>
        <taxon>Pseudomonadota</taxon>
        <taxon>Gammaproteobacteria</taxon>
        <taxon>Pasteurellales</taxon>
        <taxon>Pasteurellaceae</taxon>
        <taxon>Haemophilus</taxon>
    </lineage>
</organism>
<feature type="chain" id="PRO_1000019211" description="Enolase">
    <location>
        <begin position="1"/>
        <end position="436"/>
    </location>
</feature>
<feature type="active site" description="Proton donor" evidence="1">
    <location>
        <position position="209"/>
    </location>
</feature>
<feature type="active site" description="Proton acceptor" evidence="1">
    <location>
        <position position="343"/>
    </location>
</feature>
<feature type="binding site" evidence="1">
    <location>
        <position position="167"/>
    </location>
    <ligand>
        <name>(2R)-2-phosphoglycerate</name>
        <dbReference type="ChEBI" id="CHEBI:58289"/>
    </ligand>
</feature>
<feature type="binding site" evidence="1">
    <location>
        <position position="246"/>
    </location>
    <ligand>
        <name>Mg(2+)</name>
        <dbReference type="ChEBI" id="CHEBI:18420"/>
    </ligand>
</feature>
<feature type="binding site" evidence="1">
    <location>
        <position position="291"/>
    </location>
    <ligand>
        <name>Mg(2+)</name>
        <dbReference type="ChEBI" id="CHEBI:18420"/>
    </ligand>
</feature>
<feature type="binding site" evidence="1">
    <location>
        <position position="318"/>
    </location>
    <ligand>
        <name>Mg(2+)</name>
        <dbReference type="ChEBI" id="CHEBI:18420"/>
    </ligand>
</feature>
<feature type="binding site" evidence="1">
    <location>
        <position position="343"/>
    </location>
    <ligand>
        <name>(2R)-2-phosphoglycerate</name>
        <dbReference type="ChEBI" id="CHEBI:58289"/>
    </ligand>
</feature>
<feature type="binding site" evidence="1">
    <location>
        <position position="372"/>
    </location>
    <ligand>
        <name>(2R)-2-phosphoglycerate</name>
        <dbReference type="ChEBI" id="CHEBI:58289"/>
    </ligand>
</feature>
<feature type="binding site" evidence="1">
    <location>
        <position position="373"/>
    </location>
    <ligand>
        <name>(2R)-2-phosphoglycerate</name>
        <dbReference type="ChEBI" id="CHEBI:58289"/>
    </ligand>
</feature>
<feature type="binding site" evidence="1">
    <location>
        <position position="394"/>
    </location>
    <ligand>
        <name>(2R)-2-phosphoglycerate</name>
        <dbReference type="ChEBI" id="CHEBI:58289"/>
    </ligand>
</feature>
<evidence type="ECO:0000255" key="1">
    <source>
        <dbReference type="HAMAP-Rule" id="MF_00318"/>
    </source>
</evidence>
<keyword id="KW-0963">Cytoplasm</keyword>
<keyword id="KW-0324">Glycolysis</keyword>
<keyword id="KW-0456">Lyase</keyword>
<keyword id="KW-0460">Magnesium</keyword>
<keyword id="KW-0479">Metal-binding</keyword>
<keyword id="KW-0964">Secreted</keyword>
<reference key="1">
    <citation type="journal article" date="2007" name="Genome Biol.">
        <title>Characterization and modeling of the Haemophilus influenzae core and supragenomes based on the complete genomic sequences of Rd and 12 clinical nontypeable strains.</title>
        <authorList>
            <person name="Hogg J.S."/>
            <person name="Hu F.Z."/>
            <person name="Janto B."/>
            <person name="Boissy R."/>
            <person name="Hayes J."/>
            <person name="Keefe R."/>
            <person name="Post J.C."/>
            <person name="Ehrlich G.D."/>
        </authorList>
    </citation>
    <scope>NUCLEOTIDE SEQUENCE [LARGE SCALE GENOMIC DNA]</scope>
    <source>
        <strain>PittGG</strain>
    </source>
</reference>
<protein>
    <recommendedName>
        <fullName evidence="1">Enolase</fullName>
        <ecNumber evidence="1">4.2.1.11</ecNumber>
    </recommendedName>
    <alternativeName>
        <fullName evidence="1">2-phospho-D-glycerate hydro-lyase</fullName>
    </alternativeName>
    <alternativeName>
        <fullName evidence="1">2-phosphoglycerate dehydratase</fullName>
    </alternativeName>
</protein>
<proteinExistence type="inferred from homology"/>
<name>ENO_HAEIG</name>
<sequence>MAKIVKVIGREIIDSRGNPTVEAEVHLEGGFVGLAAAPSGASTGSREALELRDGDKSRFLGKGVLKAVAAVNNEIAQAIVGKDATNQAEIDQIMIDLDGTENKSNFGANAILAVSLANAKAAAASKGLPLYAYIAELNGTAGVYSMPLPMMNIINGGEHADNNVDIQEFMIQPVGAKTLREALRIGAEVFHNLAKVLKAKGMSTAVGDEGGFAPNLASNADALACIKEAVEKAGYVLGKDVTLAMDCASSEFYNKENGMYEMKGEGKSFTSQEFTHYLEELCKEYPIVSIEDGQDESDWEGFAYQTKVLGDRVQLVGDDLFVTNTKILKEGIEKGIANSILIKFNQIGSLTETLAAIKMAKDAGYTAVISHRSGETEDATIADLAVGTAAGQIKTGSMSRSDRIAKYNQLIRIEEALERAGTPAAFPGLKAVKGQA</sequence>
<comment type="function">
    <text evidence="1">Catalyzes the reversible conversion of 2-phosphoglycerate (2-PG) into phosphoenolpyruvate (PEP). It is essential for the degradation of carbohydrates via glycolysis.</text>
</comment>
<comment type="catalytic activity">
    <reaction evidence="1">
        <text>(2R)-2-phosphoglycerate = phosphoenolpyruvate + H2O</text>
        <dbReference type="Rhea" id="RHEA:10164"/>
        <dbReference type="ChEBI" id="CHEBI:15377"/>
        <dbReference type="ChEBI" id="CHEBI:58289"/>
        <dbReference type="ChEBI" id="CHEBI:58702"/>
        <dbReference type="EC" id="4.2.1.11"/>
    </reaction>
</comment>
<comment type="cofactor">
    <cofactor evidence="1">
        <name>Mg(2+)</name>
        <dbReference type="ChEBI" id="CHEBI:18420"/>
    </cofactor>
    <text evidence="1">Binds a second Mg(2+) ion via substrate during catalysis.</text>
</comment>
<comment type="pathway">
    <text evidence="1">Carbohydrate degradation; glycolysis; pyruvate from D-glyceraldehyde 3-phosphate: step 4/5.</text>
</comment>
<comment type="subunit">
    <text evidence="1">Component of the RNA degradosome, a multiprotein complex involved in RNA processing and mRNA degradation.</text>
</comment>
<comment type="subcellular location">
    <subcellularLocation>
        <location evidence="1">Cytoplasm</location>
    </subcellularLocation>
    <subcellularLocation>
        <location evidence="1">Secreted</location>
    </subcellularLocation>
    <subcellularLocation>
        <location evidence="1">Cell surface</location>
    </subcellularLocation>
    <text evidence="1">Fractions of enolase are present in both the cytoplasm and on the cell surface.</text>
</comment>
<comment type="similarity">
    <text evidence="1">Belongs to the enolase family.</text>
</comment>
<accession>A5UI73</accession>
<dbReference type="EC" id="4.2.1.11" evidence="1"/>
<dbReference type="EMBL" id="CP000672">
    <property type="protein sequence ID" value="ABR00479.1"/>
    <property type="molecule type" value="Genomic_DNA"/>
</dbReference>
<dbReference type="SMR" id="A5UI73"/>
<dbReference type="KEGG" id="hiq:CGSHiGG_08225"/>
<dbReference type="HOGENOM" id="CLU_031223_2_1_6"/>
<dbReference type="UniPathway" id="UPA00109">
    <property type="reaction ID" value="UER00187"/>
</dbReference>
<dbReference type="Proteomes" id="UP000001990">
    <property type="component" value="Chromosome"/>
</dbReference>
<dbReference type="GO" id="GO:0009986">
    <property type="term" value="C:cell surface"/>
    <property type="evidence" value="ECO:0007669"/>
    <property type="project" value="UniProtKB-SubCell"/>
</dbReference>
<dbReference type="GO" id="GO:0005576">
    <property type="term" value="C:extracellular region"/>
    <property type="evidence" value="ECO:0007669"/>
    <property type="project" value="UniProtKB-SubCell"/>
</dbReference>
<dbReference type="GO" id="GO:0000015">
    <property type="term" value="C:phosphopyruvate hydratase complex"/>
    <property type="evidence" value="ECO:0007669"/>
    <property type="project" value="InterPro"/>
</dbReference>
<dbReference type="GO" id="GO:0000287">
    <property type="term" value="F:magnesium ion binding"/>
    <property type="evidence" value="ECO:0007669"/>
    <property type="project" value="UniProtKB-UniRule"/>
</dbReference>
<dbReference type="GO" id="GO:0004634">
    <property type="term" value="F:phosphopyruvate hydratase activity"/>
    <property type="evidence" value="ECO:0007669"/>
    <property type="project" value="UniProtKB-UniRule"/>
</dbReference>
<dbReference type="GO" id="GO:0006096">
    <property type="term" value="P:glycolytic process"/>
    <property type="evidence" value="ECO:0007669"/>
    <property type="project" value="UniProtKB-UniRule"/>
</dbReference>
<dbReference type="CDD" id="cd03313">
    <property type="entry name" value="enolase"/>
    <property type="match status" value="1"/>
</dbReference>
<dbReference type="FunFam" id="3.20.20.120:FF:000001">
    <property type="entry name" value="Enolase"/>
    <property type="match status" value="1"/>
</dbReference>
<dbReference type="FunFam" id="3.30.390.10:FF:000001">
    <property type="entry name" value="Enolase"/>
    <property type="match status" value="1"/>
</dbReference>
<dbReference type="Gene3D" id="3.20.20.120">
    <property type="entry name" value="Enolase-like C-terminal domain"/>
    <property type="match status" value="1"/>
</dbReference>
<dbReference type="Gene3D" id="3.30.390.10">
    <property type="entry name" value="Enolase-like, N-terminal domain"/>
    <property type="match status" value="1"/>
</dbReference>
<dbReference type="HAMAP" id="MF_00318">
    <property type="entry name" value="Enolase"/>
    <property type="match status" value="1"/>
</dbReference>
<dbReference type="InterPro" id="IPR000941">
    <property type="entry name" value="Enolase"/>
</dbReference>
<dbReference type="InterPro" id="IPR036849">
    <property type="entry name" value="Enolase-like_C_sf"/>
</dbReference>
<dbReference type="InterPro" id="IPR029017">
    <property type="entry name" value="Enolase-like_N"/>
</dbReference>
<dbReference type="InterPro" id="IPR020810">
    <property type="entry name" value="Enolase_C"/>
</dbReference>
<dbReference type="InterPro" id="IPR020809">
    <property type="entry name" value="Enolase_CS"/>
</dbReference>
<dbReference type="InterPro" id="IPR020811">
    <property type="entry name" value="Enolase_N"/>
</dbReference>
<dbReference type="NCBIfam" id="TIGR01060">
    <property type="entry name" value="eno"/>
    <property type="match status" value="1"/>
</dbReference>
<dbReference type="PANTHER" id="PTHR11902">
    <property type="entry name" value="ENOLASE"/>
    <property type="match status" value="1"/>
</dbReference>
<dbReference type="PANTHER" id="PTHR11902:SF1">
    <property type="entry name" value="ENOLASE"/>
    <property type="match status" value="1"/>
</dbReference>
<dbReference type="Pfam" id="PF00113">
    <property type="entry name" value="Enolase_C"/>
    <property type="match status" value="1"/>
</dbReference>
<dbReference type="Pfam" id="PF03952">
    <property type="entry name" value="Enolase_N"/>
    <property type="match status" value="1"/>
</dbReference>
<dbReference type="PIRSF" id="PIRSF001400">
    <property type="entry name" value="Enolase"/>
    <property type="match status" value="1"/>
</dbReference>
<dbReference type="PRINTS" id="PR00148">
    <property type="entry name" value="ENOLASE"/>
</dbReference>
<dbReference type="SFLD" id="SFLDF00002">
    <property type="entry name" value="enolase"/>
    <property type="match status" value="1"/>
</dbReference>
<dbReference type="SFLD" id="SFLDG00178">
    <property type="entry name" value="enolase"/>
    <property type="match status" value="1"/>
</dbReference>
<dbReference type="SMART" id="SM01192">
    <property type="entry name" value="Enolase_C"/>
    <property type="match status" value="1"/>
</dbReference>
<dbReference type="SMART" id="SM01193">
    <property type="entry name" value="Enolase_N"/>
    <property type="match status" value="1"/>
</dbReference>
<dbReference type="SUPFAM" id="SSF51604">
    <property type="entry name" value="Enolase C-terminal domain-like"/>
    <property type="match status" value="1"/>
</dbReference>
<dbReference type="SUPFAM" id="SSF54826">
    <property type="entry name" value="Enolase N-terminal domain-like"/>
    <property type="match status" value="1"/>
</dbReference>
<dbReference type="PROSITE" id="PS00164">
    <property type="entry name" value="ENOLASE"/>
    <property type="match status" value="1"/>
</dbReference>